<sequence length="345" mass="36942">MSRELTLQERLDGEAGPDPLRQAVKKAVAALAQAAIDISDLTCRGALAGITGEAQGRNTDGDVQKDLDVRADQIIRDALGALPIAVLASEEMAELDILNPGAPISVAFDPLDGSSNINTNISVGTIFSIMPTPPDASAAFTQPGSAQLAAGFVVYGPQTSLILTLGQGVDIFTLDRVERVFKLTGSMMQIPADATEFAINTSNRRHWDLPVRAYIDECLMGADGPSGKNFNMRWIGSLVAEAFRILVRGGIFLYPGDARDGYEDGRLRLVYEAHPMAFIIEQAGGGASTGRKRILDIVPGSLHQRVPLIMGSIKNVRRLEDMHTGPNVALEANAPLFGHRGLFRV</sequence>
<reference key="1">
    <citation type="submission" date="2006-03" db="EMBL/GenBank/DDBJ databases">
        <title>Complete sequence of chromosome of Nitrobacter hamburgensis X14.</title>
        <authorList>
            <consortium name="US DOE Joint Genome Institute"/>
            <person name="Copeland A."/>
            <person name="Lucas S."/>
            <person name="Lapidus A."/>
            <person name="Barry K."/>
            <person name="Detter J.C."/>
            <person name="Glavina del Rio T."/>
            <person name="Hammon N."/>
            <person name="Israni S."/>
            <person name="Dalin E."/>
            <person name="Tice H."/>
            <person name="Pitluck S."/>
            <person name="Chain P."/>
            <person name="Malfatti S."/>
            <person name="Shin M."/>
            <person name="Vergez L."/>
            <person name="Schmutz J."/>
            <person name="Larimer F."/>
            <person name="Land M."/>
            <person name="Hauser L."/>
            <person name="Kyrpides N."/>
            <person name="Ivanova N."/>
            <person name="Ward B."/>
            <person name="Arp D."/>
            <person name="Klotz M."/>
            <person name="Stein L."/>
            <person name="O'Mullan G."/>
            <person name="Starkenburg S."/>
            <person name="Sayavedra L."/>
            <person name="Poret-Peterson A.T."/>
            <person name="Gentry M.E."/>
            <person name="Bruce D."/>
            <person name="Richardson P."/>
        </authorList>
    </citation>
    <scope>NUCLEOTIDE SEQUENCE [LARGE SCALE GENOMIC DNA]</scope>
    <source>
        <strain>DSM 10229 / NCIMB 13809 / X14</strain>
    </source>
</reference>
<name>F16A1_NITHX</name>
<keyword id="KW-0119">Carbohydrate metabolism</keyword>
<keyword id="KW-0963">Cytoplasm</keyword>
<keyword id="KW-0378">Hydrolase</keyword>
<keyword id="KW-0460">Magnesium</keyword>
<keyword id="KW-0479">Metal-binding</keyword>
<keyword id="KW-1185">Reference proteome</keyword>
<organism>
    <name type="scientific">Nitrobacter hamburgensis (strain DSM 10229 / NCIMB 13809 / X14)</name>
    <dbReference type="NCBI Taxonomy" id="323097"/>
    <lineage>
        <taxon>Bacteria</taxon>
        <taxon>Pseudomonadati</taxon>
        <taxon>Pseudomonadota</taxon>
        <taxon>Alphaproteobacteria</taxon>
        <taxon>Hyphomicrobiales</taxon>
        <taxon>Nitrobacteraceae</taxon>
        <taxon>Nitrobacter</taxon>
    </lineage>
</organism>
<accession>Q1QH19</accession>
<gene>
    <name evidence="1" type="primary">fbp1</name>
    <name type="ordered locus">Nham_3754</name>
</gene>
<dbReference type="EC" id="3.1.3.11" evidence="1"/>
<dbReference type="EMBL" id="CP000319">
    <property type="protein sequence ID" value="ABE64478.1"/>
    <property type="molecule type" value="Genomic_DNA"/>
</dbReference>
<dbReference type="RefSeq" id="WP_011512111.1">
    <property type="nucleotide sequence ID" value="NC_007964.1"/>
</dbReference>
<dbReference type="SMR" id="Q1QH19"/>
<dbReference type="STRING" id="323097.Nham_3754"/>
<dbReference type="KEGG" id="nha:Nham_3754"/>
<dbReference type="eggNOG" id="COG0158">
    <property type="taxonomic scope" value="Bacteria"/>
</dbReference>
<dbReference type="HOGENOM" id="CLU_039977_0_0_5"/>
<dbReference type="OrthoDB" id="9806756at2"/>
<dbReference type="UniPathway" id="UPA00138"/>
<dbReference type="Proteomes" id="UP000001953">
    <property type="component" value="Chromosome"/>
</dbReference>
<dbReference type="GO" id="GO:0005829">
    <property type="term" value="C:cytosol"/>
    <property type="evidence" value="ECO:0007669"/>
    <property type="project" value="TreeGrafter"/>
</dbReference>
<dbReference type="GO" id="GO:0042132">
    <property type="term" value="F:fructose 1,6-bisphosphate 1-phosphatase activity"/>
    <property type="evidence" value="ECO:0007669"/>
    <property type="project" value="UniProtKB-UniRule"/>
</dbReference>
<dbReference type="GO" id="GO:0000287">
    <property type="term" value="F:magnesium ion binding"/>
    <property type="evidence" value="ECO:0007669"/>
    <property type="project" value="UniProtKB-UniRule"/>
</dbReference>
<dbReference type="GO" id="GO:0030388">
    <property type="term" value="P:fructose 1,6-bisphosphate metabolic process"/>
    <property type="evidence" value="ECO:0007669"/>
    <property type="project" value="TreeGrafter"/>
</dbReference>
<dbReference type="GO" id="GO:0006002">
    <property type="term" value="P:fructose 6-phosphate metabolic process"/>
    <property type="evidence" value="ECO:0007669"/>
    <property type="project" value="TreeGrafter"/>
</dbReference>
<dbReference type="GO" id="GO:0006000">
    <property type="term" value="P:fructose metabolic process"/>
    <property type="evidence" value="ECO:0007669"/>
    <property type="project" value="TreeGrafter"/>
</dbReference>
<dbReference type="GO" id="GO:0006094">
    <property type="term" value="P:gluconeogenesis"/>
    <property type="evidence" value="ECO:0007669"/>
    <property type="project" value="UniProtKB-UniRule"/>
</dbReference>
<dbReference type="GO" id="GO:0005986">
    <property type="term" value="P:sucrose biosynthetic process"/>
    <property type="evidence" value="ECO:0007669"/>
    <property type="project" value="TreeGrafter"/>
</dbReference>
<dbReference type="CDD" id="cd00354">
    <property type="entry name" value="FBPase"/>
    <property type="match status" value="1"/>
</dbReference>
<dbReference type="FunFam" id="3.40.190.80:FF:000011">
    <property type="entry name" value="Fructose-1,6-bisphosphatase class 1"/>
    <property type="match status" value="1"/>
</dbReference>
<dbReference type="Gene3D" id="3.40.190.80">
    <property type="match status" value="1"/>
</dbReference>
<dbReference type="Gene3D" id="3.30.540.10">
    <property type="entry name" value="Fructose-1,6-Bisphosphatase, subunit A, domain 1"/>
    <property type="match status" value="1"/>
</dbReference>
<dbReference type="HAMAP" id="MF_01855">
    <property type="entry name" value="FBPase_class1"/>
    <property type="match status" value="1"/>
</dbReference>
<dbReference type="InterPro" id="IPR044015">
    <property type="entry name" value="FBPase_C_dom"/>
</dbReference>
<dbReference type="InterPro" id="IPR000146">
    <property type="entry name" value="FBPase_class-1"/>
</dbReference>
<dbReference type="InterPro" id="IPR033391">
    <property type="entry name" value="FBPase_N"/>
</dbReference>
<dbReference type="InterPro" id="IPR028343">
    <property type="entry name" value="FBPtase"/>
</dbReference>
<dbReference type="InterPro" id="IPR020548">
    <property type="entry name" value="Fructose_bisphosphatase_AS"/>
</dbReference>
<dbReference type="NCBIfam" id="NF006779">
    <property type="entry name" value="PRK09293.1-3"/>
    <property type="match status" value="1"/>
</dbReference>
<dbReference type="NCBIfam" id="NF006780">
    <property type="entry name" value="PRK09293.1-4"/>
    <property type="match status" value="1"/>
</dbReference>
<dbReference type="PANTHER" id="PTHR11556">
    <property type="entry name" value="FRUCTOSE-1,6-BISPHOSPHATASE-RELATED"/>
    <property type="match status" value="1"/>
</dbReference>
<dbReference type="PANTHER" id="PTHR11556:SF35">
    <property type="entry name" value="SEDOHEPTULOSE-1,7-BISPHOSPHATASE, CHLOROPLASTIC"/>
    <property type="match status" value="1"/>
</dbReference>
<dbReference type="Pfam" id="PF00316">
    <property type="entry name" value="FBPase"/>
    <property type="match status" value="1"/>
</dbReference>
<dbReference type="Pfam" id="PF18913">
    <property type="entry name" value="FBPase_C"/>
    <property type="match status" value="1"/>
</dbReference>
<dbReference type="PIRSF" id="PIRSF500210">
    <property type="entry name" value="FBPtase"/>
    <property type="match status" value="1"/>
</dbReference>
<dbReference type="PIRSF" id="PIRSF000904">
    <property type="entry name" value="FBPtase_SBPase"/>
    <property type="match status" value="1"/>
</dbReference>
<dbReference type="PRINTS" id="PR00115">
    <property type="entry name" value="F16BPHPHTASE"/>
</dbReference>
<dbReference type="SUPFAM" id="SSF56655">
    <property type="entry name" value="Carbohydrate phosphatase"/>
    <property type="match status" value="1"/>
</dbReference>
<dbReference type="PROSITE" id="PS00124">
    <property type="entry name" value="FBPASE"/>
    <property type="match status" value="1"/>
</dbReference>
<comment type="catalytic activity">
    <reaction evidence="1">
        <text>beta-D-fructose 1,6-bisphosphate + H2O = beta-D-fructose 6-phosphate + phosphate</text>
        <dbReference type="Rhea" id="RHEA:11064"/>
        <dbReference type="ChEBI" id="CHEBI:15377"/>
        <dbReference type="ChEBI" id="CHEBI:32966"/>
        <dbReference type="ChEBI" id="CHEBI:43474"/>
        <dbReference type="ChEBI" id="CHEBI:57634"/>
        <dbReference type="EC" id="3.1.3.11"/>
    </reaction>
</comment>
<comment type="cofactor">
    <cofactor evidence="1">
        <name>Mg(2+)</name>
        <dbReference type="ChEBI" id="CHEBI:18420"/>
    </cofactor>
    <text evidence="1">Binds 2 magnesium ions per subunit.</text>
</comment>
<comment type="pathway">
    <text evidence="1">Carbohydrate biosynthesis; gluconeogenesis.</text>
</comment>
<comment type="subunit">
    <text evidence="1">Homotetramer.</text>
</comment>
<comment type="subcellular location">
    <subcellularLocation>
        <location evidence="1">Cytoplasm</location>
    </subcellularLocation>
</comment>
<comment type="similarity">
    <text evidence="1">Belongs to the FBPase class 1 family.</text>
</comment>
<feature type="chain" id="PRO_0000364612" description="Fructose-1,6-bisphosphatase class 1 1">
    <location>
        <begin position="1"/>
        <end position="345"/>
    </location>
</feature>
<feature type="binding site" evidence="1">
    <location>
        <position position="90"/>
    </location>
    <ligand>
        <name>Mg(2+)</name>
        <dbReference type="ChEBI" id="CHEBI:18420"/>
        <label>1</label>
    </ligand>
</feature>
<feature type="binding site" evidence="1">
    <location>
        <position position="109"/>
    </location>
    <ligand>
        <name>Mg(2+)</name>
        <dbReference type="ChEBI" id="CHEBI:18420"/>
        <label>1</label>
    </ligand>
</feature>
<feature type="binding site" evidence="1">
    <location>
        <position position="109"/>
    </location>
    <ligand>
        <name>Mg(2+)</name>
        <dbReference type="ChEBI" id="CHEBI:18420"/>
        <label>2</label>
    </ligand>
</feature>
<feature type="binding site" evidence="1">
    <location>
        <position position="111"/>
    </location>
    <ligand>
        <name>Mg(2+)</name>
        <dbReference type="ChEBI" id="CHEBI:18420"/>
        <label>1</label>
    </ligand>
</feature>
<feature type="binding site" evidence="1">
    <location>
        <begin position="112"/>
        <end position="115"/>
    </location>
    <ligand>
        <name>substrate</name>
    </ligand>
</feature>
<feature type="binding site" evidence="1">
    <location>
        <position position="112"/>
    </location>
    <ligand>
        <name>Mg(2+)</name>
        <dbReference type="ChEBI" id="CHEBI:18420"/>
        <label>2</label>
    </ligand>
</feature>
<feature type="binding site" evidence="1">
    <location>
        <position position="200"/>
    </location>
    <ligand>
        <name>substrate</name>
    </ligand>
</feature>
<feature type="binding site" evidence="1">
    <location>
        <position position="272"/>
    </location>
    <ligand>
        <name>Mg(2+)</name>
        <dbReference type="ChEBI" id="CHEBI:18420"/>
        <label>2</label>
    </ligand>
</feature>
<proteinExistence type="inferred from homology"/>
<protein>
    <recommendedName>
        <fullName evidence="1">Fructose-1,6-bisphosphatase class 1 1</fullName>
        <shortName evidence="1">FBPase class 1 1</shortName>
        <ecNumber evidence="1">3.1.3.11</ecNumber>
    </recommendedName>
    <alternativeName>
        <fullName evidence="1">D-fructose-1,6-bisphosphate 1-phosphohydrolase class 1 1</fullName>
    </alternativeName>
</protein>
<evidence type="ECO:0000255" key="1">
    <source>
        <dbReference type="HAMAP-Rule" id="MF_01855"/>
    </source>
</evidence>